<gene>
    <name evidence="1" type="primary">rimP</name>
    <name type="ordered locus">A1I_03485</name>
</gene>
<sequence length="168" mass="19367">MQTIEQQITDLIQETLSDMGFELVLVRVKGLSSKVVEILIDRLDDQKVTIEDCTKASNTISAILDVEDLIEEAYYLEVSSSGVERPLVKFENYKRFIGREVKIKLKELLNGRSRYQGTIIEAKDDKVYLKWEDQEVIINYDLIKSANLVLTEEMFKKLLGSENKSNTR</sequence>
<proteinExistence type="inferred from homology"/>
<reference key="1">
    <citation type="submission" date="2007-09" db="EMBL/GenBank/DDBJ databases">
        <title>Complete genome sequencing of Rickettsia bellii.</title>
        <authorList>
            <person name="Madan A."/>
            <person name="Lee H."/>
            <person name="Madan A."/>
            <person name="Yoon J.-G."/>
            <person name="Ryu G.-Y."/>
            <person name="Dasch G."/>
            <person name="Ereemeva M."/>
        </authorList>
    </citation>
    <scope>NUCLEOTIDE SEQUENCE [LARGE SCALE GENOMIC DNA]</scope>
    <source>
        <strain>OSU 85-389</strain>
    </source>
</reference>
<accession>A8GW29</accession>
<name>RIMP_RICB8</name>
<keyword id="KW-0963">Cytoplasm</keyword>
<keyword id="KW-0690">Ribosome biogenesis</keyword>
<comment type="function">
    <text evidence="1">Required for maturation of 30S ribosomal subunits.</text>
</comment>
<comment type="subcellular location">
    <subcellularLocation>
        <location evidence="1">Cytoplasm</location>
    </subcellularLocation>
</comment>
<comment type="similarity">
    <text evidence="1">Belongs to the RimP family.</text>
</comment>
<comment type="sequence caution" evidence="2">
    <conflict type="erroneous initiation">
        <sequence resource="EMBL-CDS" id="ABV79056"/>
    </conflict>
</comment>
<feature type="chain" id="PRO_0000384751" description="Ribosome maturation factor RimP">
    <location>
        <begin position="1"/>
        <end position="168"/>
    </location>
</feature>
<dbReference type="EMBL" id="CP000849">
    <property type="protein sequence ID" value="ABV79056.1"/>
    <property type="status" value="ALT_INIT"/>
    <property type="molecule type" value="Genomic_DNA"/>
</dbReference>
<dbReference type="RefSeq" id="WP_041804650.1">
    <property type="nucleotide sequence ID" value="NC_009883.1"/>
</dbReference>
<dbReference type="SMR" id="A8GW29"/>
<dbReference type="KEGG" id="rbo:A1I_03485"/>
<dbReference type="HOGENOM" id="CLU_070525_0_2_5"/>
<dbReference type="GO" id="GO:0005829">
    <property type="term" value="C:cytosol"/>
    <property type="evidence" value="ECO:0007669"/>
    <property type="project" value="TreeGrafter"/>
</dbReference>
<dbReference type="GO" id="GO:0000028">
    <property type="term" value="P:ribosomal small subunit assembly"/>
    <property type="evidence" value="ECO:0007669"/>
    <property type="project" value="TreeGrafter"/>
</dbReference>
<dbReference type="GO" id="GO:0006412">
    <property type="term" value="P:translation"/>
    <property type="evidence" value="ECO:0007669"/>
    <property type="project" value="TreeGrafter"/>
</dbReference>
<dbReference type="CDD" id="cd01734">
    <property type="entry name" value="YlxS_C"/>
    <property type="match status" value="1"/>
</dbReference>
<dbReference type="FunFam" id="3.30.300.70:FF:000001">
    <property type="entry name" value="Ribosome maturation factor RimP"/>
    <property type="match status" value="1"/>
</dbReference>
<dbReference type="Gene3D" id="2.30.30.180">
    <property type="entry name" value="Ribosome maturation factor RimP, C-terminal domain"/>
    <property type="match status" value="1"/>
</dbReference>
<dbReference type="Gene3D" id="3.30.300.70">
    <property type="entry name" value="RimP-like superfamily, N-terminal"/>
    <property type="match status" value="1"/>
</dbReference>
<dbReference type="HAMAP" id="MF_01077">
    <property type="entry name" value="RimP"/>
    <property type="match status" value="1"/>
</dbReference>
<dbReference type="InterPro" id="IPR003728">
    <property type="entry name" value="Ribosome_maturation_RimP"/>
</dbReference>
<dbReference type="InterPro" id="IPR028998">
    <property type="entry name" value="RimP_C"/>
</dbReference>
<dbReference type="InterPro" id="IPR036847">
    <property type="entry name" value="RimP_C_sf"/>
</dbReference>
<dbReference type="InterPro" id="IPR028989">
    <property type="entry name" value="RimP_N"/>
</dbReference>
<dbReference type="InterPro" id="IPR035956">
    <property type="entry name" value="RimP_N_sf"/>
</dbReference>
<dbReference type="PANTHER" id="PTHR33867">
    <property type="entry name" value="RIBOSOME MATURATION FACTOR RIMP"/>
    <property type="match status" value="1"/>
</dbReference>
<dbReference type="PANTHER" id="PTHR33867:SF1">
    <property type="entry name" value="RIBOSOME MATURATION FACTOR RIMP"/>
    <property type="match status" value="1"/>
</dbReference>
<dbReference type="Pfam" id="PF17384">
    <property type="entry name" value="DUF150_C"/>
    <property type="match status" value="1"/>
</dbReference>
<dbReference type="Pfam" id="PF02576">
    <property type="entry name" value="RimP_N"/>
    <property type="match status" value="1"/>
</dbReference>
<dbReference type="SUPFAM" id="SSF74942">
    <property type="entry name" value="YhbC-like, C-terminal domain"/>
    <property type="match status" value="1"/>
</dbReference>
<dbReference type="SUPFAM" id="SSF75420">
    <property type="entry name" value="YhbC-like, N-terminal domain"/>
    <property type="match status" value="1"/>
</dbReference>
<protein>
    <recommendedName>
        <fullName evidence="1">Ribosome maturation factor RimP</fullName>
    </recommendedName>
</protein>
<evidence type="ECO:0000255" key="1">
    <source>
        <dbReference type="HAMAP-Rule" id="MF_01077"/>
    </source>
</evidence>
<evidence type="ECO:0000305" key="2"/>
<organism>
    <name type="scientific">Rickettsia bellii (strain OSU 85-389)</name>
    <dbReference type="NCBI Taxonomy" id="391896"/>
    <lineage>
        <taxon>Bacteria</taxon>
        <taxon>Pseudomonadati</taxon>
        <taxon>Pseudomonadota</taxon>
        <taxon>Alphaproteobacteria</taxon>
        <taxon>Rickettsiales</taxon>
        <taxon>Rickettsiaceae</taxon>
        <taxon>Rickettsieae</taxon>
        <taxon>Rickettsia</taxon>
        <taxon>belli group</taxon>
    </lineage>
</organism>